<dbReference type="EC" id="5.3.3.2" evidence="1"/>
<dbReference type="EMBL" id="CP000903">
    <property type="protein sequence ID" value="ABY42669.1"/>
    <property type="molecule type" value="Genomic_DNA"/>
</dbReference>
<dbReference type="RefSeq" id="WP_002030759.1">
    <property type="nucleotide sequence ID" value="NC_010184.1"/>
</dbReference>
<dbReference type="SMR" id="A9VMA7"/>
<dbReference type="KEGG" id="bwe:BcerKBAB4_1422"/>
<dbReference type="eggNOG" id="COG1304">
    <property type="taxonomic scope" value="Bacteria"/>
</dbReference>
<dbReference type="HOGENOM" id="CLU_065515_0_0_9"/>
<dbReference type="Proteomes" id="UP000002154">
    <property type="component" value="Chromosome"/>
</dbReference>
<dbReference type="GO" id="GO:0005737">
    <property type="term" value="C:cytoplasm"/>
    <property type="evidence" value="ECO:0007669"/>
    <property type="project" value="UniProtKB-SubCell"/>
</dbReference>
<dbReference type="GO" id="GO:0010181">
    <property type="term" value="F:FMN binding"/>
    <property type="evidence" value="ECO:0007669"/>
    <property type="project" value="UniProtKB-UniRule"/>
</dbReference>
<dbReference type="GO" id="GO:0004452">
    <property type="term" value="F:isopentenyl-diphosphate delta-isomerase activity"/>
    <property type="evidence" value="ECO:0007669"/>
    <property type="project" value="UniProtKB-UniRule"/>
</dbReference>
<dbReference type="GO" id="GO:0000287">
    <property type="term" value="F:magnesium ion binding"/>
    <property type="evidence" value="ECO:0007669"/>
    <property type="project" value="UniProtKB-UniRule"/>
</dbReference>
<dbReference type="GO" id="GO:0070402">
    <property type="term" value="F:NADPH binding"/>
    <property type="evidence" value="ECO:0007669"/>
    <property type="project" value="UniProtKB-UniRule"/>
</dbReference>
<dbReference type="GO" id="GO:0016491">
    <property type="term" value="F:oxidoreductase activity"/>
    <property type="evidence" value="ECO:0007669"/>
    <property type="project" value="InterPro"/>
</dbReference>
<dbReference type="GO" id="GO:0008299">
    <property type="term" value="P:isoprenoid biosynthetic process"/>
    <property type="evidence" value="ECO:0007669"/>
    <property type="project" value="UniProtKB-UniRule"/>
</dbReference>
<dbReference type="CDD" id="cd02811">
    <property type="entry name" value="IDI-2_FMN"/>
    <property type="match status" value="1"/>
</dbReference>
<dbReference type="Gene3D" id="3.20.20.70">
    <property type="entry name" value="Aldolase class I"/>
    <property type="match status" value="1"/>
</dbReference>
<dbReference type="HAMAP" id="MF_00354">
    <property type="entry name" value="Idi_2"/>
    <property type="match status" value="1"/>
</dbReference>
<dbReference type="InterPro" id="IPR013785">
    <property type="entry name" value="Aldolase_TIM"/>
</dbReference>
<dbReference type="InterPro" id="IPR000262">
    <property type="entry name" value="FMN-dep_DH"/>
</dbReference>
<dbReference type="InterPro" id="IPR011179">
    <property type="entry name" value="IPdP_isomerase"/>
</dbReference>
<dbReference type="NCBIfam" id="TIGR02151">
    <property type="entry name" value="IPP_isom_2"/>
    <property type="match status" value="1"/>
</dbReference>
<dbReference type="PANTHER" id="PTHR43665">
    <property type="entry name" value="ISOPENTENYL-DIPHOSPHATE DELTA-ISOMERASE"/>
    <property type="match status" value="1"/>
</dbReference>
<dbReference type="PANTHER" id="PTHR43665:SF1">
    <property type="entry name" value="ISOPENTENYL-DIPHOSPHATE DELTA-ISOMERASE"/>
    <property type="match status" value="1"/>
</dbReference>
<dbReference type="Pfam" id="PF01070">
    <property type="entry name" value="FMN_dh"/>
    <property type="match status" value="1"/>
</dbReference>
<dbReference type="PIRSF" id="PIRSF003314">
    <property type="entry name" value="IPP_isomerase"/>
    <property type="match status" value="1"/>
</dbReference>
<dbReference type="SUPFAM" id="SSF51395">
    <property type="entry name" value="FMN-linked oxidoreductases"/>
    <property type="match status" value="1"/>
</dbReference>
<keyword id="KW-0963">Cytoplasm</keyword>
<keyword id="KW-0285">Flavoprotein</keyword>
<keyword id="KW-0288">FMN</keyword>
<keyword id="KW-0413">Isomerase</keyword>
<keyword id="KW-0414">Isoprene biosynthesis</keyword>
<keyword id="KW-0460">Magnesium</keyword>
<keyword id="KW-0479">Metal-binding</keyword>
<keyword id="KW-0521">NADP</keyword>
<reference key="1">
    <citation type="journal article" date="2008" name="Chem. Biol. Interact.">
        <title>Extending the Bacillus cereus group genomics to putative food-borne pathogens of different toxicity.</title>
        <authorList>
            <person name="Lapidus A."/>
            <person name="Goltsman E."/>
            <person name="Auger S."/>
            <person name="Galleron N."/>
            <person name="Segurens B."/>
            <person name="Dossat C."/>
            <person name="Land M.L."/>
            <person name="Broussolle V."/>
            <person name="Brillard J."/>
            <person name="Guinebretiere M.-H."/>
            <person name="Sanchis V."/>
            <person name="Nguen-the C."/>
            <person name="Lereclus D."/>
            <person name="Richardson P."/>
            <person name="Wincker P."/>
            <person name="Weissenbach J."/>
            <person name="Ehrlich S.D."/>
            <person name="Sorokin A."/>
        </authorList>
    </citation>
    <scope>NUCLEOTIDE SEQUENCE [LARGE SCALE GENOMIC DNA]</scope>
    <source>
        <strain>KBAB4</strain>
    </source>
</reference>
<sequence length="349" mass="38193">MVRAKRKLDHIEYALSTGQSRTHGFHDIDFVHQSLPNSSYDTITCETKIGELSLSSPIFINAMTGGGGEQTLHINEQLAYVAKHHNLAMAVGSQMAALKDESESASYKVVRKVNPNGIFFANLGSEATVEQAERAVDMIEANALQIHLNVIQELTMPEGDRDFTGVLQRIEKIVLKSKVPVIVKEVGFGMSKETVQQLANIGITAIDIGGQGGTNFAAVENERRQRMLSYFNNWGIQTATSIIEATSTNNNLSFIASGGIQTALDVAKAIALGANTTAFAGYFLRILMQDGVENLVDEIDLLHTDLKFIMTALGVKTIEELQSVPLVVKGETYHWLAQRGIDTAHYSRR</sequence>
<evidence type="ECO:0000255" key="1">
    <source>
        <dbReference type="HAMAP-Rule" id="MF_00354"/>
    </source>
</evidence>
<accession>A9VMA7</accession>
<feature type="chain" id="PRO_1000120541" description="Isopentenyl-diphosphate delta-isomerase">
    <location>
        <begin position="1"/>
        <end position="349"/>
    </location>
</feature>
<feature type="binding site" evidence="1">
    <location>
        <begin position="6"/>
        <end position="7"/>
    </location>
    <ligand>
        <name>substrate</name>
    </ligand>
</feature>
<feature type="binding site" evidence="1">
    <location>
        <begin position="62"/>
        <end position="64"/>
    </location>
    <ligand>
        <name>FMN</name>
        <dbReference type="ChEBI" id="CHEBI:58210"/>
    </ligand>
</feature>
<feature type="binding site" evidence="1">
    <location>
        <position position="93"/>
    </location>
    <ligand>
        <name>FMN</name>
        <dbReference type="ChEBI" id="CHEBI:58210"/>
    </ligand>
</feature>
<feature type="binding site" evidence="1">
    <location>
        <position position="122"/>
    </location>
    <ligand>
        <name>FMN</name>
        <dbReference type="ChEBI" id="CHEBI:58210"/>
    </ligand>
</feature>
<feature type="binding site" evidence="1">
    <location>
        <position position="152"/>
    </location>
    <ligand>
        <name>substrate</name>
    </ligand>
</feature>
<feature type="binding site" evidence="1">
    <location>
        <position position="153"/>
    </location>
    <ligand>
        <name>Mg(2+)</name>
        <dbReference type="ChEBI" id="CHEBI:18420"/>
    </ligand>
</feature>
<feature type="binding site" evidence="1">
    <location>
        <position position="184"/>
    </location>
    <ligand>
        <name>FMN</name>
        <dbReference type="ChEBI" id="CHEBI:58210"/>
    </ligand>
</feature>
<feature type="binding site" evidence="1">
    <location>
        <position position="214"/>
    </location>
    <ligand>
        <name>FMN</name>
        <dbReference type="ChEBI" id="CHEBI:58210"/>
    </ligand>
</feature>
<feature type="binding site" evidence="1">
    <location>
        <begin position="258"/>
        <end position="259"/>
    </location>
    <ligand>
        <name>FMN</name>
        <dbReference type="ChEBI" id="CHEBI:58210"/>
    </ligand>
</feature>
<feature type="binding site" evidence="1">
    <location>
        <begin position="280"/>
        <end position="281"/>
    </location>
    <ligand>
        <name>FMN</name>
        <dbReference type="ChEBI" id="CHEBI:58210"/>
    </ligand>
</feature>
<protein>
    <recommendedName>
        <fullName evidence="1">Isopentenyl-diphosphate delta-isomerase</fullName>
        <shortName evidence="1">IPP isomerase</shortName>
        <ecNumber evidence="1">5.3.3.2</ecNumber>
    </recommendedName>
    <alternativeName>
        <fullName evidence="1">Isopentenyl diphosphate:dimethylallyl diphosphate isomerase</fullName>
    </alternativeName>
    <alternativeName>
        <fullName evidence="1">Isopentenyl pyrophosphate isomerase</fullName>
    </alternativeName>
    <alternativeName>
        <fullName evidence="1">Type 2 isopentenyl diphosphate isomerase</fullName>
        <shortName evidence="1">IDI-2</shortName>
    </alternativeName>
</protein>
<comment type="function">
    <text evidence="1">Involved in the biosynthesis of isoprenoids. Catalyzes the 1,3-allylic rearrangement of the homoallylic substrate isopentenyl (IPP) to its allylic isomer, dimethylallyl diphosphate (DMAPP).</text>
</comment>
<comment type="catalytic activity">
    <reaction evidence="1">
        <text>isopentenyl diphosphate = dimethylallyl diphosphate</text>
        <dbReference type="Rhea" id="RHEA:23284"/>
        <dbReference type="ChEBI" id="CHEBI:57623"/>
        <dbReference type="ChEBI" id="CHEBI:128769"/>
        <dbReference type="EC" id="5.3.3.2"/>
    </reaction>
</comment>
<comment type="cofactor">
    <cofactor evidence="1">
        <name>FMN</name>
        <dbReference type="ChEBI" id="CHEBI:58210"/>
    </cofactor>
</comment>
<comment type="cofactor">
    <cofactor evidence="1">
        <name>NADPH</name>
        <dbReference type="ChEBI" id="CHEBI:57783"/>
    </cofactor>
</comment>
<comment type="cofactor">
    <cofactor evidence="1">
        <name>Mg(2+)</name>
        <dbReference type="ChEBI" id="CHEBI:18420"/>
    </cofactor>
</comment>
<comment type="subunit">
    <text evidence="1">Homooctamer. Dimer of tetramers.</text>
</comment>
<comment type="subcellular location">
    <subcellularLocation>
        <location evidence="1">Cytoplasm</location>
    </subcellularLocation>
</comment>
<comment type="similarity">
    <text evidence="1">Belongs to the IPP isomerase type 2 family.</text>
</comment>
<gene>
    <name evidence="1" type="primary">fni</name>
    <name type="ordered locus">BcerKBAB4_1422</name>
</gene>
<proteinExistence type="inferred from homology"/>
<name>IDI2_BACMK</name>
<organism>
    <name type="scientific">Bacillus mycoides (strain KBAB4)</name>
    <name type="common">Bacillus weihenstephanensis</name>
    <dbReference type="NCBI Taxonomy" id="315730"/>
    <lineage>
        <taxon>Bacteria</taxon>
        <taxon>Bacillati</taxon>
        <taxon>Bacillota</taxon>
        <taxon>Bacilli</taxon>
        <taxon>Bacillales</taxon>
        <taxon>Bacillaceae</taxon>
        <taxon>Bacillus</taxon>
        <taxon>Bacillus cereus group</taxon>
    </lineage>
</organism>